<accession>Q54QP8</accession>
<evidence type="ECO:0000256" key="1">
    <source>
        <dbReference type="SAM" id="MobiDB-lite"/>
    </source>
</evidence>
<gene>
    <name type="ORF">DDB_G0283705</name>
</gene>
<dbReference type="EMBL" id="AAFI02000056">
    <property type="protein sequence ID" value="EAL65619.1"/>
    <property type="molecule type" value="Genomic_DNA"/>
</dbReference>
<dbReference type="RefSeq" id="XP_638975.1">
    <property type="nucleotide sequence ID" value="XM_633883.1"/>
</dbReference>
<dbReference type="PaxDb" id="44689-DDB0185639"/>
<dbReference type="EnsemblProtists" id="EAL65619">
    <property type="protein sequence ID" value="EAL65619"/>
    <property type="gene ID" value="DDB_G0283705"/>
</dbReference>
<dbReference type="GeneID" id="8624221"/>
<dbReference type="KEGG" id="ddi:DDB_G0283705"/>
<dbReference type="dictyBase" id="DDB_G0283705"/>
<dbReference type="HOGENOM" id="CLU_2983090_0_0_1"/>
<dbReference type="InParanoid" id="Q54QP8"/>
<dbReference type="PRO" id="PR:Q54QP8"/>
<dbReference type="Proteomes" id="UP000002195">
    <property type="component" value="Chromosome 4"/>
</dbReference>
<organism>
    <name type="scientific">Dictyostelium discoideum</name>
    <name type="common">Social amoeba</name>
    <dbReference type="NCBI Taxonomy" id="44689"/>
    <lineage>
        <taxon>Eukaryota</taxon>
        <taxon>Amoebozoa</taxon>
        <taxon>Evosea</taxon>
        <taxon>Eumycetozoa</taxon>
        <taxon>Dictyostelia</taxon>
        <taxon>Dictyosteliales</taxon>
        <taxon>Dictyosteliaceae</taxon>
        <taxon>Dictyostelium</taxon>
    </lineage>
</organism>
<keyword id="KW-1185">Reference proteome</keyword>
<protein>
    <recommendedName>
        <fullName>Putative uncharacterized protein DDB_G0283705</fullName>
    </recommendedName>
</protein>
<feature type="chain" id="PRO_0000350889" description="Putative uncharacterized protein DDB_G0283705">
    <location>
        <begin position="1"/>
        <end position="58"/>
    </location>
</feature>
<feature type="region of interest" description="Disordered" evidence="1">
    <location>
        <begin position="23"/>
        <end position="58"/>
    </location>
</feature>
<feature type="compositionally biased region" description="Low complexity" evidence="1">
    <location>
        <begin position="23"/>
        <end position="51"/>
    </location>
</feature>
<proteinExistence type="predicted"/>
<sequence length="58" mass="6091">MELVKCQPGICNCSCKPESLIPTTTSTSTTTTSTTTSTTTSTTTTTTTTTTKDFNTET</sequence>
<name>Y5639_DICDI</name>
<reference key="1">
    <citation type="journal article" date="2005" name="Nature">
        <title>The genome of the social amoeba Dictyostelium discoideum.</title>
        <authorList>
            <person name="Eichinger L."/>
            <person name="Pachebat J.A."/>
            <person name="Gloeckner G."/>
            <person name="Rajandream M.A."/>
            <person name="Sucgang R."/>
            <person name="Berriman M."/>
            <person name="Song J."/>
            <person name="Olsen R."/>
            <person name="Szafranski K."/>
            <person name="Xu Q."/>
            <person name="Tunggal B."/>
            <person name="Kummerfeld S."/>
            <person name="Madera M."/>
            <person name="Konfortov B.A."/>
            <person name="Rivero F."/>
            <person name="Bankier A.T."/>
            <person name="Lehmann R."/>
            <person name="Hamlin N."/>
            <person name="Davies R."/>
            <person name="Gaudet P."/>
            <person name="Fey P."/>
            <person name="Pilcher K."/>
            <person name="Chen G."/>
            <person name="Saunders D."/>
            <person name="Sodergren E.J."/>
            <person name="Davis P."/>
            <person name="Kerhornou A."/>
            <person name="Nie X."/>
            <person name="Hall N."/>
            <person name="Anjard C."/>
            <person name="Hemphill L."/>
            <person name="Bason N."/>
            <person name="Farbrother P."/>
            <person name="Desany B."/>
            <person name="Just E."/>
            <person name="Morio T."/>
            <person name="Rost R."/>
            <person name="Churcher C.M."/>
            <person name="Cooper J."/>
            <person name="Haydock S."/>
            <person name="van Driessche N."/>
            <person name="Cronin A."/>
            <person name="Goodhead I."/>
            <person name="Muzny D.M."/>
            <person name="Mourier T."/>
            <person name="Pain A."/>
            <person name="Lu M."/>
            <person name="Harper D."/>
            <person name="Lindsay R."/>
            <person name="Hauser H."/>
            <person name="James K.D."/>
            <person name="Quiles M."/>
            <person name="Madan Babu M."/>
            <person name="Saito T."/>
            <person name="Buchrieser C."/>
            <person name="Wardroper A."/>
            <person name="Felder M."/>
            <person name="Thangavelu M."/>
            <person name="Johnson D."/>
            <person name="Knights A."/>
            <person name="Loulseged H."/>
            <person name="Mungall K.L."/>
            <person name="Oliver K."/>
            <person name="Price C."/>
            <person name="Quail M.A."/>
            <person name="Urushihara H."/>
            <person name="Hernandez J."/>
            <person name="Rabbinowitsch E."/>
            <person name="Steffen D."/>
            <person name="Sanders M."/>
            <person name="Ma J."/>
            <person name="Kohara Y."/>
            <person name="Sharp S."/>
            <person name="Simmonds M.N."/>
            <person name="Spiegler S."/>
            <person name="Tivey A."/>
            <person name="Sugano S."/>
            <person name="White B."/>
            <person name="Walker D."/>
            <person name="Woodward J.R."/>
            <person name="Winckler T."/>
            <person name="Tanaka Y."/>
            <person name="Shaulsky G."/>
            <person name="Schleicher M."/>
            <person name="Weinstock G.M."/>
            <person name="Rosenthal A."/>
            <person name="Cox E.C."/>
            <person name="Chisholm R.L."/>
            <person name="Gibbs R.A."/>
            <person name="Loomis W.F."/>
            <person name="Platzer M."/>
            <person name="Kay R.R."/>
            <person name="Williams J.G."/>
            <person name="Dear P.H."/>
            <person name="Noegel A.A."/>
            <person name="Barrell B.G."/>
            <person name="Kuspa A."/>
        </authorList>
    </citation>
    <scope>NUCLEOTIDE SEQUENCE [LARGE SCALE GENOMIC DNA]</scope>
    <source>
        <strain>AX4</strain>
    </source>
</reference>